<dbReference type="EC" id="3.4.16.-"/>
<dbReference type="EMBL" id="AC011560">
    <property type="protein sequence ID" value="AAG51371.1"/>
    <property type="molecule type" value="Genomic_DNA"/>
</dbReference>
<dbReference type="EMBL" id="AC013428">
    <property type="protein sequence ID" value="AAF76347.1"/>
    <property type="molecule type" value="Genomic_DNA"/>
</dbReference>
<dbReference type="EMBL" id="CP002686">
    <property type="protein sequence ID" value="AEE74908.1"/>
    <property type="molecule type" value="Genomic_DNA"/>
</dbReference>
<dbReference type="EMBL" id="AY088751">
    <property type="protein sequence ID" value="AAM67067.1"/>
    <property type="molecule type" value="mRNA"/>
</dbReference>
<dbReference type="RefSeq" id="NP_187656.1">
    <molecule id="Q9SQX6-1"/>
    <property type="nucleotide sequence ID" value="NM_111880.5"/>
</dbReference>
<dbReference type="SMR" id="Q9SQX6"/>
<dbReference type="FunCoup" id="Q9SQX6">
    <property type="interactions" value="929"/>
</dbReference>
<dbReference type="STRING" id="3702.Q9SQX6"/>
<dbReference type="ESTHER" id="arath-SCP7">
    <property type="family name" value="Carboxypeptidase_S10"/>
</dbReference>
<dbReference type="MEROPS" id="S10.A15"/>
<dbReference type="GlyCosmos" id="Q9SQX6">
    <property type="glycosylation" value="3 sites, No reported glycans"/>
</dbReference>
<dbReference type="GlyGen" id="Q9SQX6">
    <property type="glycosylation" value="3 sites"/>
</dbReference>
<dbReference type="PaxDb" id="3702-AT3G10450.1"/>
<dbReference type="ProteomicsDB" id="232749">
    <molecule id="Q9SQX6-1"/>
</dbReference>
<dbReference type="EnsemblPlants" id="AT3G10450.1">
    <molecule id="Q9SQX6-1"/>
    <property type="protein sequence ID" value="AT3G10450.1"/>
    <property type="gene ID" value="AT3G10450"/>
</dbReference>
<dbReference type="GeneID" id="820209"/>
<dbReference type="Gramene" id="AT3G10450.1">
    <molecule id="Q9SQX6-1"/>
    <property type="protein sequence ID" value="AT3G10450.1"/>
    <property type="gene ID" value="AT3G10450"/>
</dbReference>
<dbReference type="KEGG" id="ath:AT3G10450"/>
<dbReference type="Araport" id="AT3G10450"/>
<dbReference type="TAIR" id="AT3G10450">
    <property type="gene designation" value="SCPL7"/>
</dbReference>
<dbReference type="eggNOG" id="KOG1282">
    <property type="taxonomic scope" value="Eukaryota"/>
</dbReference>
<dbReference type="HOGENOM" id="CLU_008523_0_1_1"/>
<dbReference type="InParanoid" id="Q9SQX6"/>
<dbReference type="OMA" id="APENSAC"/>
<dbReference type="OrthoDB" id="443318at2759"/>
<dbReference type="PhylomeDB" id="Q9SQX6"/>
<dbReference type="BioCyc" id="ARA:AT3G10450-MONOMER"/>
<dbReference type="PRO" id="PR:Q9SQX6"/>
<dbReference type="Proteomes" id="UP000006548">
    <property type="component" value="Chromosome 3"/>
</dbReference>
<dbReference type="ExpressionAtlas" id="Q9SQX6">
    <property type="expression patterns" value="baseline and differential"/>
</dbReference>
<dbReference type="GO" id="GO:0005576">
    <property type="term" value="C:extracellular region"/>
    <property type="evidence" value="ECO:0007669"/>
    <property type="project" value="UniProtKB-SubCell"/>
</dbReference>
<dbReference type="GO" id="GO:0004185">
    <property type="term" value="F:serine-type carboxypeptidase activity"/>
    <property type="evidence" value="ECO:0007669"/>
    <property type="project" value="InterPro"/>
</dbReference>
<dbReference type="GO" id="GO:0006508">
    <property type="term" value="P:proteolysis"/>
    <property type="evidence" value="ECO:0007669"/>
    <property type="project" value="UniProtKB-KW"/>
</dbReference>
<dbReference type="FunFam" id="3.40.50.12670:FF:000001">
    <property type="entry name" value="Carboxypeptidase"/>
    <property type="match status" value="1"/>
</dbReference>
<dbReference type="FunFam" id="3.40.50.1820:FF:000148">
    <property type="entry name" value="Serine carboxypeptidase-like 11"/>
    <property type="match status" value="1"/>
</dbReference>
<dbReference type="Gene3D" id="3.40.50.1820">
    <property type="entry name" value="alpha/beta hydrolase"/>
    <property type="match status" value="1"/>
</dbReference>
<dbReference type="InterPro" id="IPR029058">
    <property type="entry name" value="AB_hydrolase_fold"/>
</dbReference>
<dbReference type="InterPro" id="IPR001563">
    <property type="entry name" value="Peptidase_S10"/>
</dbReference>
<dbReference type="PANTHER" id="PTHR11802:SF505">
    <property type="entry name" value="SERINE CARBOXYPEPTIDASE-LIKE 7"/>
    <property type="match status" value="1"/>
</dbReference>
<dbReference type="PANTHER" id="PTHR11802">
    <property type="entry name" value="SERINE PROTEASE FAMILY S10 SERINE CARBOXYPEPTIDASE"/>
    <property type="match status" value="1"/>
</dbReference>
<dbReference type="Pfam" id="PF00450">
    <property type="entry name" value="Peptidase_S10"/>
    <property type="match status" value="1"/>
</dbReference>
<dbReference type="PRINTS" id="PR00724">
    <property type="entry name" value="CRBOXYPTASEC"/>
</dbReference>
<dbReference type="SUPFAM" id="SSF53474">
    <property type="entry name" value="alpha/beta-Hydrolases"/>
    <property type="match status" value="1"/>
</dbReference>
<proteinExistence type="evidence at transcript level"/>
<protein>
    <recommendedName>
        <fullName>Serine carboxypeptidase-like 7</fullName>
        <ecNumber>3.4.16.-</ecNumber>
    </recommendedName>
</protein>
<feature type="signal peptide" evidence="2">
    <location>
        <begin position="1"/>
        <end position="25"/>
    </location>
</feature>
<feature type="chain" id="PRO_0000274621" description="Serine carboxypeptidase-like 7">
    <location>
        <begin position="26"/>
        <end position="437"/>
    </location>
</feature>
<feature type="active site" evidence="1">
    <location>
        <position position="180"/>
    </location>
</feature>
<feature type="active site" evidence="1">
    <location>
        <position position="362"/>
    </location>
</feature>
<feature type="active site" evidence="1">
    <location>
        <position position="415"/>
    </location>
</feature>
<feature type="glycosylation site" description="N-linked (GlcNAc...) asparagine" evidence="2">
    <location>
        <position position="105"/>
    </location>
</feature>
<feature type="glycosylation site" description="N-linked (GlcNAc...) asparagine" evidence="2">
    <location>
        <position position="346"/>
    </location>
</feature>
<feature type="glycosylation site" description="N-linked (GlcNAc...) asparagine" evidence="2">
    <location>
        <position position="378"/>
    </location>
</feature>
<feature type="disulfide bond" evidence="1">
    <location>
        <begin position="84"/>
        <end position="327"/>
    </location>
</feature>
<feature type="disulfide bond" evidence="1">
    <location>
        <begin position="248"/>
        <end position="262"/>
    </location>
</feature>
<feature type="disulfide bond" evidence="1">
    <location>
        <begin position="286"/>
        <end position="293"/>
    </location>
</feature>
<reference key="1">
    <citation type="journal article" date="2000" name="Nature">
        <title>Sequence and analysis of chromosome 3 of the plant Arabidopsis thaliana.</title>
        <authorList>
            <person name="Salanoubat M."/>
            <person name="Lemcke K."/>
            <person name="Rieger M."/>
            <person name="Ansorge W."/>
            <person name="Unseld M."/>
            <person name="Fartmann B."/>
            <person name="Valle G."/>
            <person name="Bloecker H."/>
            <person name="Perez-Alonso M."/>
            <person name="Obermaier B."/>
            <person name="Delseny M."/>
            <person name="Boutry M."/>
            <person name="Grivell L.A."/>
            <person name="Mache R."/>
            <person name="Puigdomenech P."/>
            <person name="De Simone V."/>
            <person name="Choisne N."/>
            <person name="Artiguenave F."/>
            <person name="Robert C."/>
            <person name="Brottier P."/>
            <person name="Wincker P."/>
            <person name="Cattolico L."/>
            <person name="Weissenbach J."/>
            <person name="Saurin W."/>
            <person name="Quetier F."/>
            <person name="Schaefer M."/>
            <person name="Mueller-Auer S."/>
            <person name="Gabel C."/>
            <person name="Fuchs M."/>
            <person name="Benes V."/>
            <person name="Wurmbach E."/>
            <person name="Drzonek H."/>
            <person name="Erfle H."/>
            <person name="Jordan N."/>
            <person name="Bangert S."/>
            <person name="Wiedelmann R."/>
            <person name="Kranz H."/>
            <person name="Voss H."/>
            <person name="Holland R."/>
            <person name="Brandt P."/>
            <person name="Nyakatura G."/>
            <person name="Vezzi A."/>
            <person name="D'Angelo M."/>
            <person name="Pallavicini A."/>
            <person name="Toppo S."/>
            <person name="Simionati B."/>
            <person name="Conrad A."/>
            <person name="Hornischer K."/>
            <person name="Kauer G."/>
            <person name="Loehnert T.-H."/>
            <person name="Nordsiek G."/>
            <person name="Reichelt J."/>
            <person name="Scharfe M."/>
            <person name="Schoen O."/>
            <person name="Bargues M."/>
            <person name="Terol J."/>
            <person name="Climent J."/>
            <person name="Navarro P."/>
            <person name="Collado C."/>
            <person name="Perez-Perez A."/>
            <person name="Ottenwaelder B."/>
            <person name="Duchemin D."/>
            <person name="Cooke R."/>
            <person name="Laudie M."/>
            <person name="Berger-Llauro C."/>
            <person name="Purnelle B."/>
            <person name="Masuy D."/>
            <person name="de Haan M."/>
            <person name="Maarse A.C."/>
            <person name="Alcaraz J.-P."/>
            <person name="Cottet A."/>
            <person name="Casacuberta E."/>
            <person name="Monfort A."/>
            <person name="Argiriou A."/>
            <person name="Flores M."/>
            <person name="Liguori R."/>
            <person name="Vitale D."/>
            <person name="Mannhaupt G."/>
            <person name="Haase D."/>
            <person name="Schoof H."/>
            <person name="Rudd S."/>
            <person name="Zaccaria P."/>
            <person name="Mewes H.-W."/>
            <person name="Mayer K.F.X."/>
            <person name="Kaul S."/>
            <person name="Town C.D."/>
            <person name="Koo H.L."/>
            <person name="Tallon L.J."/>
            <person name="Jenkins J."/>
            <person name="Rooney T."/>
            <person name="Rizzo M."/>
            <person name="Walts A."/>
            <person name="Utterback T."/>
            <person name="Fujii C.Y."/>
            <person name="Shea T.P."/>
            <person name="Creasy T.H."/>
            <person name="Haas B."/>
            <person name="Maiti R."/>
            <person name="Wu D."/>
            <person name="Peterson J."/>
            <person name="Van Aken S."/>
            <person name="Pai G."/>
            <person name="Militscher J."/>
            <person name="Sellers P."/>
            <person name="Gill J.E."/>
            <person name="Feldblyum T.V."/>
            <person name="Preuss D."/>
            <person name="Lin X."/>
            <person name="Nierman W.C."/>
            <person name="Salzberg S.L."/>
            <person name="White O."/>
            <person name="Venter J.C."/>
            <person name="Fraser C.M."/>
            <person name="Kaneko T."/>
            <person name="Nakamura Y."/>
            <person name="Sato S."/>
            <person name="Kato T."/>
            <person name="Asamizu E."/>
            <person name="Sasamoto S."/>
            <person name="Kimura T."/>
            <person name="Idesawa K."/>
            <person name="Kawashima K."/>
            <person name="Kishida Y."/>
            <person name="Kiyokawa C."/>
            <person name="Kohara M."/>
            <person name="Matsumoto M."/>
            <person name="Matsuno A."/>
            <person name="Muraki A."/>
            <person name="Nakayama S."/>
            <person name="Nakazaki N."/>
            <person name="Shinpo S."/>
            <person name="Takeuchi C."/>
            <person name="Wada T."/>
            <person name="Watanabe A."/>
            <person name="Yamada M."/>
            <person name="Yasuda M."/>
            <person name="Tabata S."/>
        </authorList>
    </citation>
    <scope>NUCLEOTIDE SEQUENCE [LARGE SCALE GENOMIC DNA]</scope>
    <source>
        <strain>cv. Columbia</strain>
    </source>
</reference>
<reference key="2">
    <citation type="journal article" date="2017" name="Plant J.">
        <title>Araport11: a complete reannotation of the Arabidopsis thaliana reference genome.</title>
        <authorList>
            <person name="Cheng C.Y."/>
            <person name="Krishnakumar V."/>
            <person name="Chan A.P."/>
            <person name="Thibaud-Nissen F."/>
            <person name="Schobel S."/>
            <person name="Town C.D."/>
        </authorList>
    </citation>
    <scope>GENOME REANNOTATION</scope>
    <source>
        <strain>cv. Columbia</strain>
    </source>
</reference>
<reference key="3">
    <citation type="submission" date="2002-03" db="EMBL/GenBank/DDBJ databases">
        <title>Full-length cDNA from Arabidopsis thaliana.</title>
        <authorList>
            <person name="Brover V.V."/>
            <person name="Troukhan M.E."/>
            <person name="Alexandrov N.A."/>
            <person name="Lu Y.-P."/>
            <person name="Flavell R.B."/>
            <person name="Feldmann K.A."/>
        </authorList>
    </citation>
    <scope>NUCLEOTIDE SEQUENCE [LARGE SCALE MRNA]</scope>
</reference>
<reference key="4">
    <citation type="journal article" date="2005" name="Plant Physiol.">
        <title>An expression and bioinformatics analysis of the Arabidopsis serine carboxypeptidase-like gene family.</title>
        <authorList>
            <person name="Fraser C.M."/>
            <person name="Rider L.W."/>
            <person name="Chapple C."/>
        </authorList>
    </citation>
    <scope>GENE FAMILY</scope>
    <scope>TISSUE SPECIFICITY</scope>
    <scope>NOMENCLATURE</scope>
</reference>
<accession>Q9SQX6</accession>
<gene>
    <name type="primary">SCPL7</name>
    <name type="ordered locus">At3g10450</name>
    <name type="ORF">F13M14.27</name>
    <name type="ORF">F18K10.3</name>
</gene>
<comment type="function">
    <text evidence="1">Probable carboxypeptidase.</text>
</comment>
<comment type="subcellular location">
    <subcellularLocation>
        <location evidence="4">Secreted</location>
    </subcellularLocation>
</comment>
<comment type="alternative products">
    <event type="alternative splicing"/>
    <isoform>
        <id>Q9SQX6-1</id>
        <name>1</name>
        <sequence type="displayed"/>
    </isoform>
    <text>A number of isoforms are produced. According to EST sequences.</text>
</comment>
<comment type="tissue specificity">
    <text evidence="3">Ubiquitous.</text>
</comment>
<comment type="similarity">
    <text evidence="4">Belongs to the peptidase S10 family.</text>
</comment>
<name>SCP7_ARATH</name>
<sequence>MANDYVSTVLLLLSLLIFLSQRTDSASIVKSLPGFDGPLPFELETGYIGVGEEEEVQLFYYFIKSERNPQEDPLLLWLSGGPGCSSISGLLYENGPVNVKIEVYNGTLPSLVSTTYSWTKVSSIIYLDQPVGTGFSYSRTKLVNKPSDSGEAKRIHEFLHKWLGKHQEFSSNPFYVGGDSYCGMVIPALVQEISKGNYVCCKPPINLQGYILGNPSTENEVDINYRIPYAHGMALISDELYESMKRICKGKYENVDPRNTKCLKLVGEYQKCTKRINKALIITPECVDTSPDCYMYRYLLTTYWANDENVQRALHVNKGSIGEWVRCYFEIPYNHDIKSSVPYHMNNSIDGYASLIFSGDHDMEVPYLGTQAWIRSLNYSLIDDWRPWMIGDQIAGYTRTYANKMAFATIKGGGHTPEYKPEESYIMFQRWISGQPL</sequence>
<evidence type="ECO:0000250" key="1"/>
<evidence type="ECO:0000255" key="2"/>
<evidence type="ECO:0000269" key="3">
    <source>
    </source>
</evidence>
<evidence type="ECO:0000305" key="4"/>
<keyword id="KW-0025">Alternative splicing</keyword>
<keyword id="KW-0121">Carboxypeptidase</keyword>
<keyword id="KW-1015">Disulfide bond</keyword>
<keyword id="KW-0325">Glycoprotein</keyword>
<keyword id="KW-0378">Hydrolase</keyword>
<keyword id="KW-0645">Protease</keyword>
<keyword id="KW-1185">Reference proteome</keyword>
<keyword id="KW-0964">Secreted</keyword>
<keyword id="KW-0732">Signal</keyword>
<organism>
    <name type="scientific">Arabidopsis thaliana</name>
    <name type="common">Mouse-ear cress</name>
    <dbReference type="NCBI Taxonomy" id="3702"/>
    <lineage>
        <taxon>Eukaryota</taxon>
        <taxon>Viridiplantae</taxon>
        <taxon>Streptophyta</taxon>
        <taxon>Embryophyta</taxon>
        <taxon>Tracheophyta</taxon>
        <taxon>Spermatophyta</taxon>
        <taxon>Magnoliopsida</taxon>
        <taxon>eudicotyledons</taxon>
        <taxon>Gunneridae</taxon>
        <taxon>Pentapetalae</taxon>
        <taxon>rosids</taxon>
        <taxon>malvids</taxon>
        <taxon>Brassicales</taxon>
        <taxon>Brassicaceae</taxon>
        <taxon>Camelineae</taxon>
        <taxon>Arabidopsis</taxon>
    </lineage>
</organism>